<comment type="catalytic activity">
    <reaction evidence="1">
        <text>(4aS,6R)-4a-hydroxy-L-erythro-5,6,7,8-tetrahydrobiopterin = (6R)-L-erythro-6,7-dihydrobiopterin + H2O</text>
        <dbReference type="Rhea" id="RHEA:11920"/>
        <dbReference type="ChEBI" id="CHEBI:15377"/>
        <dbReference type="ChEBI" id="CHEBI:15642"/>
        <dbReference type="ChEBI" id="CHEBI:43120"/>
        <dbReference type="EC" id="4.2.1.96"/>
    </reaction>
</comment>
<comment type="similarity">
    <text evidence="1">Belongs to the pterin-4-alpha-carbinolamine dehydratase family.</text>
</comment>
<evidence type="ECO:0000255" key="1">
    <source>
        <dbReference type="HAMAP-Rule" id="MF_00434"/>
    </source>
</evidence>
<accession>A5IDI1</accession>
<sequence length="113" mass="12901">MTSDLSSKHCESCEGIGAALNSEQIKNLLPQLNTKWEVTEDNRIIKRAFSFKNFYETMAFVNAIAWIANIENHHPDLEVGYNYCRVHFMTHALNGLTHNDFICAAKIDKLLVD</sequence>
<keyword id="KW-0456">Lyase</keyword>
<dbReference type="EC" id="4.2.1.96" evidence="1"/>
<dbReference type="EMBL" id="CP000675">
    <property type="protein sequence ID" value="ABQ55431.1"/>
    <property type="molecule type" value="Genomic_DNA"/>
</dbReference>
<dbReference type="RefSeq" id="WP_010947715.1">
    <property type="nucleotide sequence ID" value="NZ_JAPMSS010000011.1"/>
</dbReference>
<dbReference type="SMR" id="A5IDI1"/>
<dbReference type="KEGG" id="lpc:LPC_1482"/>
<dbReference type="HOGENOM" id="CLU_081974_2_1_6"/>
<dbReference type="GO" id="GO:0008124">
    <property type="term" value="F:4-alpha-hydroxytetrahydrobiopterin dehydratase activity"/>
    <property type="evidence" value="ECO:0007669"/>
    <property type="project" value="UniProtKB-UniRule"/>
</dbReference>
<dbReference type="GO" id="GO:0006729">
    <property type="term" value="P:tetrahydrobiopterin biosynthetic process"/>
    <property type="evidence" value="ECO:0007669"/>
    <property type="project" value="InterPro"/>
</dbReference>
<dbReference type="CDD" id="cd00913">
    <property type="entry name" value="PCD_DCoH_subfamily_a"/>
    <property type="match status" value="1"/>
</dbReference>
<dbReference type="Gene3D" id="3.30.1360.20">
    <property type="entry name" value="Transcriptional coactivator/pterin dehydratase"/>
    <property type="match status" value="1"/>
</dbReference>
<dbReference type="HAMAP" id="MF_00434">
    <property type="entry name" value="Pterin_4_alpha"/>
    <property type="match status" value="1"/>
</dbReference>
<dbReference type="InterPro" id="IPR036428">
    <property type="entry name" value="PCD_sf"/>
</dbReference>
<dbReference type="InterPro" id="IPR001533">
    <property type="entry name" value="Pterin_deHydtase"/>
</dbReference>
<dbReference type="NCBIfam" id="NF002019">
    <property type="entry name" value="PRK00823.1-4"/>
    <property type="match status" value="1"/>
</dbReference>
<dbReference type="PANTHER" id="PTHR12599">
    <property type="entry name" value="PTERIN-4-ALPHA-CARBINOLAMINE DEHYDRATASE"/>
    <property type="match status" value="1"/>
</dbReference>
<dbReference type="PANTHER" id="PTHR12599:SF0">
    <property type="entry name" value="PTERIN-4-ALPHA-CARBINOLAMINE DEHYDRATASE"/>
    <property type="match status" value="1"/>
</dbReference>
<dbReference type="Pfam" id="PF01329">
    <property type="entry name" value="Pterin_4a"/>
    <property type="match status" value="1"/>
</dbReference>
<dbReference type="SUPFAM" id="SSF55248">
    <property type="entry name" value="PCD-like"/>
    <property type="match status" value="1"/>
</dbReference>
<gene>
    <name type="ordered locus">LPC_1482</name>
</gene>
<organism>
    <name type="scientific">Legionella pneumophila (strain Corby)</name>
    <dbReference type="NCBI Taxonomy" id="400673"/>
    <lineage>
        <taxon>Bacteria</taxon>
        <taxon>Pseudomonadati</taxon>
        <taxon>Pseudomonadota</taxon>
        <taxon>Gammaproteobacteria</taxon>
        <taxon>Legionellales</taxon>
        <taxon>Legionellaceae</taxon>
        <taxon>Legionella</taxon>
    </lineage>
</organism>
<name>PHS_LEGPC</name>
<protein>
    <recommendedName>
        <fullName evidence="1">Putative pterin-4-alpha-carbinolamine dehydratase</fullName>
        <shortName evidence="1">PHS</shortName>
        <ecNumber evidence="1">4.2.1.96</ecNumber>
    </recommendedName>
    <alternativeName>
        <fullName evidence="1">4-alpha-hydroxy-tetrahydropterin dehydratase</fullName>
    </alternativeName>
    <alternativeName>
        <fullName evidence="1">Pterin carbinolamine dehydratase</fullName>
        <shortName evidence="1">PCD</shortName>
    </alternativeName>
</protein>
<feature type="chain" id="PRO_1000050417" description="Putative pterin-4-alpha-carbinolamine dehydratase">
    <location>
        <begin position="1"/>
        <end position="113"/>
    </location>
</feature>
<proteinExistence type="inferred from homology"/>
<reference key="1">
    <citation type="submission" date="2006-11" db="EMBL/GenBank/DDBJ databases">
        <title>Identification and characterization of a new conjugation/ type IVA secretion system (trb/tra) of L. pneumophila Corby localized on a mobile genomic island.</title>
        <authorList>
            <person name="Gloeckner G."/>
            <person name="Albert-Weissenberger C."/>
            <person name="Weinmann E."/>
            <person name="Jacobi S."/>
            <person name="Schunder E."/>
            <person name="Steinert M."/>
            <person name="Buchrieser C."/>
            <person name="Hacker J."/>
            <person name="Heuner K."/>
        </authorList>
    </citation>
    <scope>NUCLEOTIDE SEQUENCE [LARGE SCALE GENOMIC DNA]</scope>
    <source>
        <strain>Corby</strain>
    </source>
</reference>